<dbReference type="EMBL" id="X99000">
    <property type="protein sequence ID" value="CAA67465.1"/>
    <property type="molecule type" value="Genomic_DNA"/>
</dbReference>
<dbReference type="EMBL" id="Z74251">
    <property type="protein sequence ID" value="CAA98781.1"/>
    <property type="molecule type" value="Genomic_DNA"/>
</dbReference>
<dbReference type="EMBL" id="BK006938">
    <property type="protein sequence ID" value="DAA11661.1"/>
    <property type="molecule type" value="Genomic_DNA"/>
</dbReference>
<dbReference type="PIR" id="S67762">
    <property type="entry name" value="S67762"/>
</dbReference>
<dbReference type="RefSeq" id="NP_010078.1">
    <property type="nucleotide sequence ID" value="NM_001180263.1"/>
</dbReference>
<dbReference type="SMR" id="Q07622"/>
<dbReference type="BioGRID" id="31843">
    <property type="interactions" value="208"/>
</dbReference>
<dbReference type="DIP" id="DIP-1805N"/>
<dbReference type="FunCoup" id="Q07622">
    <property type="interactions" value="80"/>
</dbReference>
<dbReference type="IntAct" id="Q07622">
    <property type="interactions" value="15"/>
</dbReference>
<dbReference type="MINT" id="Q07622"/>
<dbReference type="STRING" id="4932.YDL203C"/>
<dbReference type="iPTMnet" id="Q07622"/>
<dbReference type="PaxDb" id="4932-YDL203C"/>
<dbReference type="PeptideAtlas" id="Q07622"/>
<dbReference type="EnsemblFungi" id="YDL203C_mRNA">
    <property type="protein sequence ID" value="YDL203C"/>
    <property type="gene ID" value="YDL203C"/>
</dbReference>
<dbReference type="GeneID" id="851324"/>
<dbReference type="KEGG" id="sce:YDL203C"/>
<dbReference type="AGR" id="SGD:S000002362"/>
<dbReference type="SGD" id="S000002362">
    <property type="gene designation" value="ACK1"/>
</dbReference>
<dbReference type="VEuPathDB" id="FungiDB:YDL203C"/>
<dbReference type="eggNOG" id="KOG1550">
    <property type="taxonomic scope" value="Eukaryota"/>
</dbReference>
<dbReference type="HOGENOM" id="CLU_026113_1_0_1"/>
<dbReference type="InParanoid" id="Q07622"/>
<dbReference type="OMA" id="SHQPYLK"/>
<dbReference type="OrthoDB" id="272077at2759"/>
<dbReference type="BioCyc" id="YEAST:G3O-29586-MONOMER"/>
<dbReference type="BioGRID-ORCS" id="851324">
    <property type="hits" value="0 hits in 10 CRISPR screens"/>
</dbReference>
<dbReference type="PRO" id="PR:Q07622"/>
<dbReference type="Proteomes" id="UP000002311">
    <property type="component" value="Chromosome IV"/>
</dbReference>
<dbReference type="RNAct" id="Q07622">
    <property type="molecule type" value="protein"/>
</dbReference>
<dbReference type="GO" id="GO:0005739">
    <property type="term" value="C:mitochondrion"/>
    <property type="evidence" value="ECO:0007005"/>
    <property type="project" value="SGD"/>
</dbReference>
<dbReference type="GO" id="GO:0031505">
    <property type="term" value="P:fungal-type cell wall organization"/>
    <property type="evidence" value="ECO:0000315"/>
    <property type="project" value="SGD"/>
</dbReference>
<dbReference type="GO" id="GO:0009967">
    <property type="term" value="P:positive regulation of signal transduction"/>
    <property type="evidence" value="ECO:0000315"/>
    <property type="project" value="SGD"/>
</dbReference>
<dbReference type="Gene3D" id="1.25.40.10">
    <property type="entry name" value="Tetratricopeptide repeat domain"/>
    <property type="match status" value="3"/>
</dbReference>
<dbReference type="InterPro" id="IPR051726">
    <property type="entry name" value="Chitin_Synth_Reg"/>
</dbReference>
<dbReference type="InterPro" id="IPR006597">
    <property type="entry name" value="Sel1-like"/>
</dbReference>
<dbReference type="InterPro" id="IPR011990">
    <property type="entry name" value="TPR-like_helical_dom_sf"/>
</dbReference>
<dbReference type="PANTHER" id="PTHR46430:SF3">
    <property type="entry name" value="ACTIVATOR OF C KINASE PROTEIN 1"/>
    <property type="match status" value="1"/>
</dbReference>
<dbReference type="PANTHER" id="PTHR46430">
    <property type="entry name" value="PROTEIN SKT5-RELATED"/>
    <property type="match status" value="1"/>
</dbReference>
<dbReference type="Pfam" id="PF08238">
    <property type="entry name" value="Sel1"/>
    <property type="match status" value="7"/>
</dbReference>
<dbReference type="SMART" id="SM00671">
    <property type="entry name" value="SEL1"/>
    <property type="match status" value="7"/>
</dbReference>
<dbReference type="SUPFAM" id="SSF81901">
    <property type="entry name" value="HCP-like"/>
    <property type="match status" value="2"/>
</dbReference>
<keyword id="KW-1017">Isopeptide bond</keyword>
<keyword id="KW-1185">Reference proteome</keyword>
<keyword id="KW-0677">Repeat</keyword>
<keyword id="KW-0832">Ubl conjugation</keyword>
<reference key="1">
    <citation type="journal article" date="1997" name="Yeast">
        <title>The nucleotide sequence of a 39 kb segment of yeast chromosome IV: 12 new open reading frames, nine known genes and one gene for Gly-tRNA.</title>
        <authorList>
            <person name="Bahr A."/>
            <person name="Moeller-Rieker S."/>
            <person name="Hankeln T."/>
            <person name="Kraemer C."/>
            <person name="Protin U."/>
            <person name="Schmidt E.R."/>
        </authorList>
    </citation>
    <scope>NUCLEOTIDE SEQUENCE [GENOMIC DNA]</scope>
    <source>
        <strain>ATCC 96604 / S288c / FY1679</strain>
    </source>
</reference>
<reference key="2">
    <citation type="journal article" date="1997" name="Nature">
        <title>The nucleotide sequence of Saccharomyces cerevisiae chromosome IV.</title>
        <authorList>
            <person name="Jacq C."/>
            <person name="Alt-Moerbe J."/>
            <person name="Andre B."/>
            <person name="Arnold W."/>
            <person name="Bahr A."/>
            <person name="Ballesta J.P.G."/>
            <person name="Bargues M."/>
            <person name="Baron L."/>
            <person name="Becker A."/>
            <person name="Biteau N."/>
            <person name="Bloecker H."/>
            <person name="Blugeon C."/>
            <person name="Boskovic J."/>
            <person name="Brandt P."/>
            <person name="Brueckner M."/>
            <person name="Buitrago M.J."/>
            <person name="Coster F."/>
            <person name="Delaveau T."/>
            <person name="del Rey F."/>
            <person name="Dujon B."/>
            <person name="Eide L.G."/>
            <person name="Garcia-Cantalejo J.M."/>
            <person name="Goffeau A."/>
            <person name="Gomez-Peris A."/>
            <person name="Granotier C."/>
            <person name="Hanemann V."/>
            <person name="Hankeln T."/>
            <person name="Hoheisel J.D."/>
            <person name="Jaeger W."/>
            <person name="Jimenez A."/>
            <person name="Jonniaux J.-L."/>
            <person name="Kraemer C."/>
            <person name="Kuester H."/>
            <person name="Laamanen P."/>
            <person name="Legros Y."/>
            <person name="Louis E.J."/>
            <person name="Moeller-Rieker S."/>
            <person name="Monnet A."/>
            <person name="Moro M."/>
            <person name="Mueller-Auer S."/>
            <person name="Nussbaumer B."/>
            <person name="Paricio N."/>
            <person name="Paulin L."/>
            <person name="Perea J."/>
            <person name="Perez-Alonso M."/>
            <person name="Perez-Ortin J.E."/>
            <person name="Pohl T.M."/>
            <person name="Prydz H."/>
            <person name="Purnelle B."/>
            <person name="Rasmussen S.W."/>
            <person name="Remacha M.A."/>
            <person name="Revuelta J.L."/>
            <person name="Rieger M."/>
            <person name="Salom D."/>
            <person name="Saluz H.P."/>
            <person name="Saiz J.E."/>
            <person name="Saren A.-M."/>
            <person name="Schaefer M."/>
            <person name="Scharfe M."/>
            <person name="Schmidt E.R."/>
            <person name="Schneider C."/>
            <person name="Scholler P."/>
            <person name="Schwarz S."/>
            <person name="Soler-Mira A."/>
            <person name="Urrestarazu L.A."/>
            <person name="Verhasselt P."/>
            <person name="Vissers S."/>
            <person name="Voet M."/>
            <person name="Volckaert G."/>
            <person name="Wagner G."/>
            <person name="Wambutt R."/>
            <person name="Wedler E."/>
            <person name="Wedler H."/>
            <person name="Woelfl S."/>
            <person name="Harris D.E."/>
            <person name="Bowman S."/>
            <person name="Brown D."/>
            <person name="Churcher C.M."/>
            <person name="Connor R."/>
            <person name="Dedman K."/>
            <person name="Gentles S."/>
            <person name="Hamlin N."/>
            <person name="Hunt S."/>
            <person name="Jones L."/>
            <person name="McDonald S."/>
            <person name="Murphy L.D."/>
            <person name="Niblett D."/>
            <person name="Odell C."/>
            <person name="Oliver K."/>
            <person name="Rajandream M.A."/>
            <person name="Richards C."/>
            <person name="Shore L."/>
            <person name="Walsh S.V."/>
            <person name="Barrell B.G."/>
            <person name="Dietrich F.S."/>
            <person name="Mulligan J.T."/>
            <person name="Allen E."/>
            <person name="Araujo R."/>
            <person name="Aviles E."/>
            <person name="Berno A."/>
            <person name="Carpenter J."/>
            <person name="Chen E."/>
            <person name="Cherry J.M."/>
            <person name="Chung E."/>
            <person name="Duncan M."/>
            <person name="Hunicke-Smith S."/>
            <person name="Hyman R.W."/>
            <person name="Komp C."/>
            <person name="Lashkari D."/>
            <person name="Lew H."/>
            <person name="Lin D."/>
            <person name="Mosedale D."/>
            <person name="Nakahara K."/>
            <person name="Namath A."/>
            <person name="Oefner P."/>
            <person name="Oh C."/>
            <person name="Petel F.X."/>
            <person name="Roberts D."/>
            <person name="Schramm S."/>
            <person name="Schroeder M."/>
            <person name="Shogren T."/>
            <person name="Shroff N."/>
            <person name="Winant A."/>
            <person name="Yelton M.A."/>
            <person name="Botstein D."/>
            <person name="Davis R.W."/>
            <person name="Johnston M."/>
            <person name="Andrews S."/>
            <person name="Brinkman R."/>
            <person name="Cooper J."/>
            <person name="Ding H."/>
            <person name="Du Z."/>
            <person name="Favello A."/>
            <person name="Fulton L."/>
            <person name="Gattung S."/>
            <person name="Greco T."/>
            <person name="Hallsworth K."/>
            <person name="Hawkins J."/>
            <person name="Hillier L.W."/>
            <person name="Jier M."/>
            <person name="Johnson D."/>
            <person name="Johnston L."/>
            <person name="Kirsten J."/>
            <person name="Kucaba T."/>
            <person name="Langston Y."/>
            <person name="Latreille P."/>
            <person name="Le T."/>
            <person name="Mardis E."/>
            <person name="Menezes S."/>
            <person name="Miller N."/>
            <person name="Nhan M."/>
            <person name="Pauley A."/>
            <person name="Peluso D."/>
            <person name="Rifkin L."/>
            <person name="Riles L."/>
            <person name="Taich A."/>
            <person name="Trevaskis E."/>
            <person name="Vignati D."/>
            <person name="Wilcox L."/>
            <person name="Wohldman P."/>
            <person name="Vaudin M."/>
            <person name="Wilson R."/>
            <person name="Waterston R."/>
            <person name="Albermann K."/>
            <person name="Hani J."/>
            <person name="Heumann K."/>
            <person name="Kleine K."/>
            <person name="Mewes H.-W."/>
            <person name="Zollner A."/>
            <person name="Zaccaria P."/>
        </authorList>
    </citation>
    <scope>NUCLEOTIDE SEQUENCE [LARGE SCALE GENOMIC DNA]</scope>
    <source>
        <strain>ATCC 204508 / S288c</strain>
    </source>
</reference>
<reference key="3">
    <citation type="journal article" date="2014" name="G3 (Bethesda)">
        <title>The reference genome sequence of Saccharomyces cerevisiae: Then and now.</title>
        <authorList>
            <person name="Engel S.R."/>
            <person name="Dietrich F.S."/>
            <person name="Fisk D.G."/>
            <person name="Binkley G."/>
            <person name="Balakrishnan R."/>
            <person name="Costanzo M.C."/>
            <person name="Dwight S.S."/>
            <person name="Hitz B.C."/>
            <person name="Karra K."/>
            <person name="Nash R.S."/>
            <person name="Weng S."/>
            <person name="Wong E.D."/>
            <person name="Lloyd P."/>
            <person name="Skrzypek M.S."/>
            <person name="Miyasato S.R."/>
            <person name="Simison M."/>
            <person name="Cherry J.M."/>
        </authorList>
    </citation>
    <scope>GENOME REANNOTATION</scope>
    <source>
        <strain>ATCC 204508 / S288c</strain>
    </source>
</reference>
<reference key="4">
    <citation type="journal article" date="2003" name="Nature">
        <title>Global analysis of protein expression in yeast.</title>
        <authorList>
            <person name="Ghaemmaghami S."/>
            <person name="Huh W.-K."/>
            <person name="Bower K."/>
            <person name="Howson R.W."/>
            <person name="Belle A."/>
            <person name="Dephoure N."/>
            <person name="O'Shea E.K."/>
            <person name="Weissman J.S."/>
        </authorList>
    </citation>
    <scope>LEVEL OF PROTEIN EXPRESSION [LARGE SCALE ANALYSIS]</scope>
</reference>
<reference key="5">
    <citation type="journal article" date="2003" name="Nat. Biotechnol.">
        <title>A proteomics approach to understanding protein ubiquitination.</title>
        <authorList>
            <person name="Peng J."/>
            <person name="Schwartz D."/>
            <person name="Elias J.E."/>
            <person name="Thoreen C.C."/>
            <person name="Cheng D."/>
            <person name="Marsischky G."/>
            <person name="Roelofs J."/>
            <person name="Finley D."/>
            <person name="Gygi S.P."/>
        </authorList>
    </citation>
    <scope>UBIQUITINATION [LARGE SCALE ANALYSIS] AT LYS-184</scope>
    <scope>IDENTIFICATION BY MASS SPECTROMETRY</scope>
    <source>
        <strain>SUB592</strain>
    </source>
</reference>
<reference key="6">
    <citation type="journal article" date="2012" name="Proteomics">
        <title>Sites of ubiquitin attachment in Saccharomyces cerevisiae.</title>
        <authorList>
            <person name="Starita L.M."/>
            <person name="Lo R.S."/>
            <person name="Eng J.K."/>
            <person name="von Haller P.D."/>
            <person name="Fields S."/>
        </authorList>
    </citation>
    <scope>UBIQUITINATION [LARGE SCALE ANALYSIS] AT LYS-184 AND LYS-191</scope>
    <scope>IDENTIFICATION BY MASS SPECTROMETRY [LARGE SCALE ANALYSIS]</scope>
</reference>
<name>ACK1_YEAST</name>
<sequence>MVNQGQPQPNLYDKHINMFPPARARESSHKLGNANSDRHGLPAQNIVPAPYPVDDSIVELTPAIPFTSPSSSSSLSLPLSALNFTDGNADGGQLGTPVTINSNNGMDIFNSKPTGEIGYANNGTNSTGSRYELPFNFSSTKESLGSPAVQDASISSGNRISESVRDNSAPPPYEESESRILQEKVYRTEEKAPIRPLNNNPVPPQKINQPPTGSAKTDDNGSSGGEDKLSSYSPEALAFYQVYKKTITDSSKFTPEIQMQWCETLLTYAFNEDFISQYNINAEKLKRSLKPEEMLKNQKVILEHSFKVLTKLITLKWPPAMYLMGTLYSHQPYLPIKNKNIVIKNDEKALEYYCKAAKLNNSDACYRAGVCFEYQRGTSSLDPSPTKEQCIKKAFQYYQHGAEVCSNSACMYKLGMSHLYGLNMQKTDVLLAIKWFDKAAQKGDSPQTLYELGKIYEFSVLPPEIQNLLFANGIRKDSQLAIKYYQQCAKDFEYPLAQWKLGNCYEFGDLGLPVVAKKSIYWYSKAAAAQPKGNPMAMLSLSGWYLTGAPNILKPNNKEAFNWALKSSKCSDGKLARTEFALGFYYEKGVGCEVDLDLAKQYYQRAARMGFRKAVDALRSLTN</sequence>
<comment type="interaction">
    <interactant intactId="EBI-38674">
        <id>Q07622</id>
    </interactant>
    <interactant intactId="EBI-15702">
        <id>P51862</id>
        <label>ROM2</label>
    </interactant>
    <organismsDiffer>false</organismsDiffer>
    <experiments>3</experiments>
</comment>
<comment type="interaction">
    <interactant intactId="EBI-38674">
        <id>Q07622</id>
    </interactant>
    <interactant intactId="EBI-16219">
        <id>P39940</id>
        <label>RSP5</label>
    </interactant>
    <organismsDiffer>false</organismsDiffer>
    <experiments>3</experiments>
</comment>
<comment type="miscellaneous">
    <text evidence="2">Present with 98 molecules/cell in log phase SD medium.</text>
</comment>
<gene>
    <name type="primary">ACK1</name>
    <name type="ordered locus">YDL203C</name>
    <name type="ORF">D1066</name>
</gene>
<protein>
    <recommendedName>
        <fullName>Activator of C kinase protein 1</fullName>
    </recommendedName>
</protein>
<accession>Q07622</accession>
<accession>D6VRF1</accession>
<feature type="chain" id="PRO_0000242166" description="Activator of C kinase protein 1">
    <location>
        <begin position="1"/>
        <end position="623"/>
    </location>
</feature>
<feature type="repeat" description="Sel1-like 1">
    <location>
        <begin position="318"/>
        <end position="361"/>
    </location>
</feature>
<feature type="repeat" description="Sel1-like 2">
    <location>
        <begin position="408"/>
        <end position="444"/>
    </location>
</feature>
<feature type="repeat" description="Sel1-like 3">
    <location>
        <begin position="495"/>
        <end position="531"/>
    </location>
</feature>
<feature type="repeat" description="Sel1-like 4">
    <location>
        <begin position="576"/>
        <end position="611"/>
    </location>
</feature>
<feature type="region of interest" description="Disordered" evidence="1">
    <location>
        <begin position="141"/>
        <end position="230"/>
    </location>
</feature>
<feature type="compositionally biased region" description="Polar residues" evidence="1">
    <location>
        <begin position="152"/>
        <end position="161"/>
    </location>
</feature>
<feature type="compositionally biased region" description="Basic and acidic residues" evidence="1">
    <location>
        <begin position="176"/>
        <end position="193"/>
    </location>
</feature>
<feature type="compositionally biased region" description="Polar residues" evidence="1">
    <location>
        <begin position="206"/>
        <end position="215"/>
    </location>
</feature>
<feature type="cross-link" description="Glycyl lysine isopeptide (Lys-Gly) (interchain with G-Cter in ubiquitin)" evidence="3">
    <location>
        <position position="184"/>
    </location>
</feature>
<feature type="cross-link" description="Glycyl lysine isopeptide (Lys-Gly) (interchain with G-Cter in ubiquitin)" evidence="3">
    <location>
        <position position="191"/>
    </location>
</feature>
<organism>
    <name type="scientific">Saccharomyces cerevisiae (strain ATCC 204508 / S288c)</name>
    <name type="common">Baker's yeast</name>
    <dbReference type="NCBI Taxonomy" id="559292"/>
    <lineage>
        <taxon>Eukaryota</taxon>
        <taxon>Fungi</taxon>
        <taxon>Dikarya</taxon>
        <taxon>Ascomycota</taxon>
        <taxon>Saccharomycotina</taxon>
        <taxon>Saccharomycetes</taxon>
        <taxon>Saccharomycetales</taxon>
        <taxon>Saccharomycetaceae</taxon>
        <taxon>Saccharomyces</taxon>
    </lineage>
</organism>
<proteinExistence type="evidence at protein level"/>
<evidence type="ECO:0000256" key="1">
    <source>
        <dbReference type="SAM" id="MobiDB-lite"/>
    </source>
</evidence>
<evidence type="ECO:0000269" key="2">
    <source>
    </source>
</evidence>
<evidence type="ECO:0007744" key="3">
    <source>
    </source>
</evidence>